<proteinExistence type="inferred from homology"/>
<name>CT15_CONCL</name>
<dbReference type="EMBL" id="GU290204">
    <property type="protein sequence ID" value="ADB43131.1"/>
    <property type="molecule type" value="mRNA"/>
</dbReference>
<dbReference type="ConoServer" id="3986">
    <property type="toxin name" value="Cal1.5 precursor"/>
</dbReference>
<dbReference type="GO" id="GO:0005576">
    <property type="term" value="C:extracellular region"/>
    <property type="evidence" value="ECO:0007669"/>
    <property type="project" value="UniProtKB-SubCell"/>
</dbReference>
<dbReference type="GO" id="GO:0099106">
    <property type="term" value="F:ion channel regulator activity"/>
    <property type="evidence" value="ECO:0007669"/>
    <property type="project" value="UniProtKB-KW"/>
</dbReference>
<dbReference type="GO" id="GO:0090729">
    <property type="term" value="F:toxin activity"/>
    <property type="evidence" value="ECO:0007669"/>
    <property type="project" value="UniProtKB-KW"/>
</dbReference>
<dbReference type="InterPro" id="IPR031565">
    <property type="entry name" value="T-conotoxin"/>
</dbReference>
<dbReference type="Pfam" id="PF16981">
    <property type="entry name" value="Chi-conotoxin"/>
    <property type="match status" value="1"/>
</dbReference>
<evidence type="ECO:0000250" key="1"/>
<evidence type="ECO:0000255" key="2"/>
<evidence type="ECO:0000303" key="3">
    <source>
    </source>
</evidence>
<evidence type="ECO:0000305" key="4"/>
<evidence type="ECO:0000305" key="5">
    <source>
    </source>
</evidence>
<keyword id="KW-1015">Disulfide bond</keyword>
<keyword id="KW-0379">Hydroxylation</keyword>
<keyword id="KW-0872">Ion channel impairing toxin</keyword>
<keyword id="KW-0528">Neurotoxin</keyword>
<keyword id="KW-0964">Secreted</keyword>
<keyword id="KW-0732">Signal</keyword>
<keyword id="KW-0800">Toxin</keyword>
<organism>
    <name type="scientific">Californiconus californicus</name>
    <name type="common">California cone</name>
    <name type="synonym">Conus californicus</name>
    <dbReference type="NCBI Taxonomy" id="1736779"/>
    <lineage>
        <taxon>Eukaryota</taxon>
        <taxon>Metazoa</taxon>
        <taxon>Spiralia</taxon>
        <taxon>Lophotrochozoa</taxon>
        <taxon>Mollusca</taxon>
        <taxon>Gastropoda</taxon>
        <taxon>Caenogastropoda</taxon>
        <taxon>Neogastropoda</taxon>
        <taxon>Conoidea</taxon>
        <taxon>Conidae</taxon>
        <taxon>Californiconus</taxon>
    </lineage>
</organism>
<feature type="signal peptide" evidence="2">
    <location>
        <begin position="1"/>
        <end position="18"/>
    </location>
</feature>
<feature type="propeptide" id="PRO_5000566293" evidence="5">
    <location>
        <begin position="19"/>
        <end position="49"/>
    </location>
</feature>
<feature type="peptide" id="PRO_5000566294" description="Conotoxin Cal1.5" evidence="5">
    <location>
        <begin position="51"/>
        <end position="65"/>
    </location>
</feature>
<feature type="modified residue" description="4-hydroxyproline" evidence="1">
    <location>
        <position position="61"/>
    </location>
</feature>
<feature type="disulfide bond" evidence="1">
    <location>
        <begin position="52"/>
        <end position="62"/>
    </location>
</feature>
<feature type="disulfide bond" evidence="1">
    <location>
        <begin position="53"/>
        <end position="59"/>
    </location>
</feature>
<protein>
    <recommendedName>
        <fullName evidence="4">Conotoxin Cal1.5</fullName>
    </recommendedName>
    <alternativeName>
        <fullName evidence="3">Conotoxin Cal1.1b</fullName>
    </alternativeName>
</protein>
<reference key="1">
    <citation type="journal article" date="2011" name="Toxicon">
        <title>Diversity of conotoxin types from Conus californicus reflects a diversity of prey types and a novel evolutionary history.</title>
        <authorList>
            <person name="Elliger C.A."/>
            <person name="Richmond T.A."/>
            <person name="Lebaric Z.N."/>
            <person name="Pierce N.T."/>
            <person name="Sweedler J.V."/>
            <person name="Gilly W.F."/>
        </authorList>
    </citation>
    <scope>NUCLEOTIDE SEQUENCE [MRNA]</scope>
    <source>
        <tissue>Venom duct</tissue>
    </source>
</reference>
<comment type="function">
    <text evidence="4">Probable neurotoxin with unknown target. Possibly targets ion channels.</text>
</comment>
<comment type="subcellular location">
    <subcellularLocation>
        <location evidence="5">Secreted</location>
    </subcellularLocation>
</comment>
<comment type="tissue specificity">
    <text evidence="5">Expressed by the venom duct.</text>
</comment>
<comment type="domain">
    <text>The cysteine framework is X (CC-CX[hydroxyPro]C).</text>
</comment>
<comment type="similarity">
    <text evidence="4">Belongs to the conotoxin T superfamily.</text>
</comment>
<accession>D2Y174</accession>
<sequence length="65" mass="7269">MRCLPVFIILLLLASTAAVDVAGSKLKRRLERKPYQGSQAYVKKTAFGLRLCCKRHHGCHPCGRT</sequence>